<accession>P78810</accession>
<accession>Q1L850</accession>
<sequence>MKFGQLLKETLMYEYKYSYVNYDKLKKEIKRRNDQGGWSEEDESDFVELLEKELDKVYSFQKNKSAEVMERIRFCEEQTDEVVRRLDSDNPPNENDFAILETELTDIMATVHDLAKFSELNYTAFYKIIKKHDKHTGWILKPVFAARLNAKPFFKEQYDLLVVKLSKLYDFVRTRGSPIKGDSAAGGTQQNFVRQTTKYWVHPNNVTELKIYILKHLPVLVFNPNKEFAREDAAITSIYYDNDDLDFYLGRLEKREGAEAIRLRWYGNMDNNNIFVERKTHREDWTGEKSVKARFPLKEKYVNAFLRGDYTVEEAFAKMRKDGKKSLKEIESLERLAKEVQYTVLSRGMKPYVRSFYERTAFQLPGDARVRISLDTNLSLIREDGPSRAGNNWRRMDIGIDYPFDQLPDEDIVRFPYAILEVKLQTQFGQDPPEWVNNLVNSHLVEAVPKFSKFIHGVSTLFYDRVTLLPYWFPQMDIDIRKPATHTFIQGRSQSGTHSSSVSANVLTDSENTPIHADGDNYVDEESRIGSSSTRNDNSTFQTSDSFQELDERTNLLDISKRKGRDSFVAALNSRLKDIKDSFFLETVPKFEEPTEPTVIYEQKYVSPPGKRIYVPVRVEPKTYFALERTYLDYLRYSILMGSIGITLFSFAKTRSGILGAASFTLVALFAIFYSTFLYLWRAVNIAKHNAVRYDDRFGPTAICVITFAAISANVILNFNA</sequence>
<reference key="1">
    <citation type="journal article" date="2002" name="Nature">
        <title>The genome sequence of Schizosaccharomyces pombe.</title>
        <authorList>
            <person name="Wood V."/>
            <person name="Gwilliam R."/>
            <person name="Rajandream M.A."/>
            <person name="Lyne M.H."/>
            <person name="Lyne R."/>
            <person name="Stewart A."/>
            <person name="Sgouros J.G."/>
            <person name="Peat N."/>
            <person name="Hayles J."/>
            <person name="Baker S.G."/>
            <person name="Basham D."/>
            <person name="Bowman S."/>
            <person name="Brooks K."/>
            <person name="Brown D."/>
            <person name="Brown S."/>
            <person name="Chillingworth T."/>
            <person name="Churcher C.M."/>
            <person name="Collins M."/>
            <person name="Connor R."/>
            <person name="Cronin A."/>
            <person name="Davis P."/>
            <person name="Feltwell T."/>
            <person name="Fraser A."/>
            <person name="Gentles S."/>
            <person name="Goble A."/>
            <person name="Hamlin N."/>
            <person name="Harris D.E."/>
            <person name="Hidalgo J."/>
            <person name="Hodgson G."/>
            <person name="Holroyd S."/>
            <person name="Hornsby T."/>
            <person name="Howarth S."/>
            <person name="Huckle E.J."/>
            <person name="Hunt S."/>
            <person name="Jagels K."/>
            <person name="James K.D."/>
            <person name="Jones L."/>
            <person name="Jones M."/>
            <person name="Leather S."/>
            <person name="McDonald S."/>
            <person name="McLean J."/>
            <person name="Mooney P."/>
            <person name="Moule S."/>
            <person name="Mungall K.L."/>
            <person name="Murphy L.D."/>
            <person name="Niblett D."/>
            <person name="Odell C."/>
            <person name="Oliver K."/>
            <person name="O'Neil S."/>
            <person name="Pearson D."/>
            <person name="Quail M.A."/>
            <person name="Rabbinowitsch E."/>
            <person name="Rutherford K.M."/>
            <person name="Rutter S."/>
            <person name="Saunders D."/>
            <person name="Seeger K."/>
            <person name="Sharp S."/>
            <person name="Skelton J."/>
            <person name="Simmonds M.N."/>
            <person name="Squares R."/>
            <person name="Squares S."/>
            <person name="Stevens K."/>
            <person name="Taylor K."/>
            <person name="Taylor R.G."/>
            <person name="Tivey A."/>
            <person name="Walsh S.V."/>
            <person name="Warren T."/>
            <person name="Whitehead S."/>
            <person name="Woodward J.R."/>
            <person name="Volckaert G."/>
            <person name="Aert R."/>
            <person name="Robben J."/>
            <person name="Grymonprez B."/>
            <person name="Weltjens I."/>
            <person name="Vanstreels E."/>
            <person name="Rieger M."/>
            <person name="Schaefer M."/>
            <person name="Mueller-Auer S."/>
            <person name="Gabel C."/>
            <person name="Fuchs M."/>
            <person name="Duesterhoeft A."/>
            <person name="Fritzc C."/>
            <person name="Holzer E."/>
            <person name="Moestl D."/>
            <person name="Hilbert H."/>
            <person name="Borzym K."/>
            <person name="Langer I."/>
            <person name="Beck A."/>
            <person name="Lehrach H."/>
            <person name="Reinhardt R."/>
            <person name="Pohl T.M."/>
            <person name="Eger P."/>
            <person name="Zimmermann W."/>
            <person name="Wedler H."/>
            <person name="Wambutt R."/>
            <person name="Purnelle B."/>
            <person name="Goffeau A."/>
            <person name="Cadieu E."/>
            <person name="Dreano S."/>
            <person name="Gloux S."/>
            <person name="Lelaure V."/>
            <person name="Mottier S."/>
            <person name="Galibert F."/>
            <person name="Aves S.J."/>
            <person name="Xiang Z."/>
            <person name="Hunt C."/>
            <person name="Moore K."/>
            <person name="Hurst S.M."/>
            <person name="Lucas M."/>
            <person name="Rochet M."/>
            <person name="Gaillardin C."/>
            <person name="Tallada V.A."/>
            <person name="Garzon A."/>
            <person name="Thode G."/>
            <person name="Daga R.R."/>
            <person name="Cruzado L."/>
            <person name="Jimenez J."/>
            <person name="Sanchez M."/>
            <person name="del Rey F."/>
            <person name="Benito J."/>
            <person name="Dominguez A."/>
            <person name="Revuelta J.L."/>
            <person name="Moreno S."/>
            <person name="Armstrong J."/>
            <person name="Forsburg S.L."/>
            <person name="Cerutti L."/>
            <person name="Lowe T."/>
            <person name="McCombie W.R."/>
            <person name="Paulsen I."/>
            <person name="Potashkin J."/>
            <person name="Shpakovski G.V."/>
            <person name="Ussery D."/>
            <person name="Barrell B.G."/>
            <person name="Nurse P."/>
        </authorList>
    </citation>
    <scope>NUCLEOTIDE SEQUENCE [LARGE SCALE GENOMIC DNA]</scope>
    <source>
        <strain>972 / ATCC 24843</strain>
    </source>
</reference>
<reference key="2">
    <citation type="journal article" date="1997" name="DNA Res.">
        <title>Identification of open reading frames in Schizosaccharomyces pombe cDNAs.</title>
        <authorList>
            <person name="Yoshioka S."/>
            <person name="Kato K."/>
            <person name="Nakai K."/>
            <person name="Okayama H."/>
            <person name="Nojima H."/>
        </authorList>
    </citation>
    <scope>NUCLEOTIDE SEQUENCE [MRNA] OF 192-721</scope>
    <source>
        <strain>PR745</strain>
    </source>
</reference>
<reference key="3">
    <citation type="journal article" date="2008" name="J. Proteome Res.">
        <title>Phosphoproteome analysis of fission yeast.</title>
        <authorList>
            <person name="Wilson-Grady J.T."/>
            <person name="Villen J."/>
            <person name="Gygi S.P."/>
        </authorList>
    </citation>
    <scope>PHOSPHORYLATION [LARGE SCALE ANALYSIS] AT SER-495; THR-497; SER-501; THR-534 AND SER-546</scope>
    <scope>IDENTIFICATION BY MASS SPECTROMETRY</scope>
</reference>
<dbReference type="EC" id="2.7.4.1" evidence="1"/>
<dbReference type="EMBL" id="CU329672">
    <property type="protein sequence ID" value="CAA22867.1"/>
    <property type="molecule type" value="Genomic_DNA"/>
</dbReference>
<dbReference type="EMBL" id="D89159">
    <property type="protein sequence ID" value="BAA13821.1"/>
    <property type="molecule type" value="mRNA"/>
</dbReference>
<dbReference type="PIR" id="T40945">
    <property type="entry name" value="T40945"/>
</dbReference>
<dbReference type="PIR" id="T42520">
    <property type="entry name" value="T42520"/>
</dbReference>
<dbReference type="RefSeq" id="NP_588142.1">
    <property type="nucleotide sequence ID" value="NM_001023132.2"/>
</dbReference>
<dbReference type="SMR" id="P78810"/>
<dbReference type="BioGRID" id="275369">
    <property type="interactions" value="8"/>
</dbReference>
<dbReference type="FunCoup" id="P78810">
    <property type="interactions" value="41"/>
</dbReference>
<dbReference type="STRING" id="284812.P78810"/>
<dbReference type="iPTMnet" id="P78810"/>
<dbReference type="PaxDb" id="4896-SPCC1322.14c.1"/>
<dbReference type="EnsemblFungi" id="SPCC1322.14c.1">
    <property type="protein sequence ID" value="SPCC1322.14c.1:pep"/>
    <property type="gene ID" value="SPCC1322.14c"/>
</dbReference>
<dbReference type="GeneID" id="2538788"/>
<dbReference type="KEGG" id="spo:2538788"/>
<dbReference type="PomBase" id="SPCC1322.14c">
    <property type="gene designation" value="vtc4"/>
</dbReference>
<dbReference type="VEuPathDB" id="FungiDB:SPCC1322.14c"/>
<dbReference type="eggNOG" id="KOG1161">
    <property type="taxonomic scope" value="Eukaryota"/>
</dbReference>
<dbReference type="eggNOG" id="KOG4580">
    <property type="taxonomic scope" value="Eukaryota"/>
</dbReference>
<dbReference type="HOGENOM" id="CLU_009308_0_0_1"/>
<dbReference type="InParanoid" id="P78810"/>
<dbReference type="OMA" id="NVNAYMR"/>
<dbReference type="PhylomeDB" id="P78810"/>
<dbReference type="PRO" id="PR:P78810"/>
<dbReference type="Proteomes" id="UP000002485">
    <property type="component" value="Chromosome III"/>
</dbReference>
<dbReference type="GO" id="GO:0005783">
    <property type="term" value="C:endoplasmic reticulum"/>
    <property type="evidence" value="ECO:0000318"/>
    <property type="project" value="GO_Central"/>
</dbReference>
<dbReference type="GO" id="GO:0000329">
    <property type="term" value="C:fungal-type vacuole membrane"/>
    <property type="evidence" value="ECO:0000318"/>
    <property type="project" value="GO_Central"/>
</dbReference>
<dbReference type="GO" id="GO:0033254">
    <property type="term" value="C:vacuolar transporter chaperone complex"/>
    <property type="evidence" value="ECO:0000318"/>
    <property type="project" value="GO_Central"/>
</dbReference>
<dbReference type="GO" id="GO:0005524">
    <property type="term" value="F:ATP binding"/>
    <property type="evidence" value="ECO:0007669"/>
    <property type="project" value="UniProtKB-KW"/>
</dbReference>
<dbReference type="GO" id="GO:0046872">
    <property type="term" value="F:metal ion binding"/>
    <property type="evidence" value="ECO:0007669"/>
    <property type="project" value="UniProtKB-KW"/>
</dbReference>
<dbReference type="GO" id="GO:0008976">
    <property type="term" value="F:polyphosphate kinase activity"/>
    <property type="evidence" value="ECO:0000266"/>
    <property type="project" value="PomBase"/>
</dbReference>
<dbReference type="GO" id="GO:0006112">
    <property type="term" value="P:energy reserve metabolic process"/>
    <property type="evidence" value="ECO:0000305"/>
    <property type="project" value="PomBase"/>
</dbReference>
<dbReference type="GO" id="GO:0006799">
    <property type="term" value="P:polyphosphate biosynthetic process"/>
    <property type="evidence" value="ECO:0000315"/>
    <property type="project" value="PomBase"/>
</dbReference>
<dbReference type="GO" id="GO:0180042">
    <property type="term" value="P:polyphosphate import into vacuole"/>
    <property type="evidence" value="ECO:0000305"/>
    <property type="project" value="PomBase"/>
</dbReference>
<dbReference type="GO" id="GO:0007034">
    <property type="term" value="P:vacuolar transport"/>
    <property type="evidence" value="ECO:0000266"/>
    <property type="project" value="PomBase"/>
</dbReference>
<dbReference type="CDD" id="cd07751">
    <property type="entry name" value="PolyPPase_VTC4_like"/>
    <property type="match status" value="1"/>
</dbReference>
<dbReference type="CDD" id="cd14480">
    <property type="entry name" value="SPX_VTC2_like"/>
    <property type="match status" value="1"/>
</dbReference>
<dbReference type="FunFam" id="3.20.100.30:FF:000001">
    <property type="entry name" value="Vacuolar transporter chaperone 4"/>
    <property type="match status" value="1"/>
</dbReference>
<dbReference type="Gene3D" id="3.20.100.30">
    <property type="entry name" value="VTC, catalytic tunnel domain"/>
    <property type="match status" value="1"/>
</dbReference>
<dbReference type="InterPro" id="IPR003807">
    <property type="entry name" value="DUF202"/>
</dbReference>
<dbReference type="InterPro" id="IPR004331">
    <property type="entry name" value="SPX_dom"/>
</dbReference>
<dbReference type="InterPro" id="IPR051572">
    <property type="entry name" value="VTC_Complex_Subunit"/>
</dbReference>
<dbReference type="InterPro" id="IPR018966">
    <property type="entry name" value="VTC_domain"/>
</dbReference>
<dbReference type="InterPro" id="IPR042267">
    <property type="entry name" value="VTC_sf"/>
</dbReference>
<dbReference type="PANTHER" id="PTHR46140">
    <property type="entry name" value="VACUOLAR TRANSPORTER CHAPERONE 1-RELATED"/>
    <property type="match status" value="1"/>
</dbReference>
<dbReference type="PANTHER" id="PTHR46140:SF1">
    <property type="entry name" value="VACUOLAR TRANSPORTER CHAPERONE COMPLEX SUBUNIT 4-RELATED"/>
    <property type="match status" value="1"/>
</dbReference>
<dbReference type="Pfam" id="PF02656">
    <property type="entry name" value="DUF202"/>
    <property type="match status" value="1"/>
</dbReference>
<dbReference type="Pfam" id="PF09359">
    <property type="entry name" value="VTC"/>
    <property type="match status" value="1"/>
</dbReference>
<dbReference type="PROSITE" id="PS51382">
    <property type="entry name" value="SPX"/>
    <property type="match status" value="1"/>
</dbReference>
<organism>
    <name type="scientific">Schizosaccharomyces pombe (strain 972 / ATCC 24843)</name>
    <name type="common">Fission yeast</name>
    <dbReference type="NCBI Taxonomy" id="284812"/>
    <lineage>
        <taxon>Eukaryota</taxon>
        <taxon>Fungi</taxon>
        <taxon>Dikarya</taxon>
        <taxon>Ascomycota</taxon>
        <taxon>Taphrinomycotina</taxon>
        <taxon>Schizosaccharomycetes</taxon>
        <taxon>Schizosaccharomycetales</taxon>
        <taxon>Schizosaccharomycetaceae</taxon>
        <taxon>Schizosaccharomyces</taxon>
    </lineage>
</organism>
<feature type="chain" id="PRO_0000363396" description="Vacuolar transporter chaperone complex subunit 4">
    <location>
        <begin position="1"/>
        <end position="721"/>
    </location>
</feature>
<feature type="topological domain" description="Cytoplasmic" evidence="1">
    <location>
        <begin position="1"/>
        <end position="631"/>
    </location>
</feature>
<feature type="transmembrane region" description="Helical" evidence="2">
    <location>
        <begin position="632"/>
        <end position="652"/>
    </location>
</feature>
<feature type="topological domain" description="Vacuolar" evidence="1">
    <location>
        <begin position="653"/>
        <end position="657"/>
    </location>
</feature>
<feature type="transmembrane region" description="Helical" evidence="2">
    <location>
        <begin position="658"/>
        <end position="678"/>
    </location>
</feature>
<feature type="topological domain" description="Cytoplasmic" evidence="1">
    <location>
        <begin position="679"/>
        <end position="697"/>
    </location>
</feature>
<feature type="transmembrane region" description="Helical" evidence="2">
    <location>
        <begin position="698"/>
        <end position="718"/>
    </location>
</feature>
<feature type="topological domain" description="Vacuolar" evidence="1">
    <location>
        <begin position="719"/>
        <end position="721"/>
    </location>
</feature>
<feature type="domain" description="SPX" evidence="3">
    <location>
        <begin position="1"/>
        <end position="146"/>
    </location>
</feature>
<feature type="region of interest" description="Disordered" evidence="4">
    <location>
        <begin position="490"/>
        <end position="547"/>
    </location>
</feature>
<feature type="compositionally biased region" description="Polar residues" evidence="4">
    <location>
        <begin position="490"/>
        <end position="513"/>
    </location>
</feature>
<feature type="compositionally biased region" description="Polar residues" evidence="4">
    <location>
        <begin position="529"/>
        <end position="547"/>
    </location>
</feature>
<feature type="active site" evidence="1">
    <location>
        <position position="453"/>
    </location>
</feature>
<feature type="binding site" evidence="1">
    <location>
        <position position="198"/>
    </location>
    <ligand>
        <name>ATP</name>
        <dbReference type="ChEBI" id="CHEBI:30616"/>
    </ligand>
</feature>
<feature type="binding site" evidence="1">
    <location>
        <position position="262"/>
    </location>
    <ligand>
        <name>ATP</name>
        <dbReference type="ChEBI" id="CHEBI:30616"/>
    </ligand>
</feature>
<feature type="binding site" evidence="1">
    <location>
        <position position="264"/>
    </location>
    <ligand>
        <name>ATP</name>
        <dbReference type="ChEBI" id="CHEBI:30616"/>
    </ligand>
</feature>
<feature type="binding site" evidence="1">
    <location>
        <position position="279"/>
    </location>
    <ligand>
        <name>ATP</name>
        <dbReference type="ChEBI" id="CHEBI:30616"/>
    </ligand>
</feature>
<feature type="binding site" evidence="1">
    <location>
        <position position="292"/>
    </location>
    <ligand>
        <name>ATP</name>
        <dbReference type="ChEBI" id="CHEBI:30616"/>
    </ligand>
</feature>
<feature type="binding site" evidence="1">
    <location>
        <position position="357"/>
    </location>
    <ligand>
        <name>ATP</name>
        <dbReference type="ChEBI" id="CHEBI:30616"/>
    </ligand>
</feature>
<feature type="binding site" evidence="1">
    <location>
        <position position="359"/>
    </location>
    <ligand>
        <name>ATP</name>
        <dbReference type="ChEBI" id="CHEBI:30616"/>
    </ligand>
</feature>
<feature type="binding site" evidence="1">
    <location>
        <position position="421"/>
    </location>
    <ligand>
        <name>Mn(2+)</name>
        <dbReference type="ChEBI" id="CHEBI:29035"/>
    </ligand>
</feature>
<feature type="modified residue" description="Phosphoserine" evidence="5">
    <location>
        <position position="495"/>
    </location>
</feature>
<feature type="modified residue" description="Phosphothreonine" evidence="5">
    <location>
        <position position="497"/>
    </location>
</feature>
<feature type="modified residue" description="Phosphoserine" evidence="5">
    <location>
        <position position="501"/>
    </location>
</feature>
<feature type="modified residue" description="Phosphothreonine" evidence="5">
    <location>
        <position position="534"/>
    </location>
</feature>
<feature type="modified residue" description="Phosphoserine" evidence="5">
    <location>
        <position position="546"/>
    </location>
</feature>
<feature type="sequence conflict" description="In Ref. 2; BAA13821." evidence="6" ref="2">
    <original>K</original>
    <variation>R</variation>
    <location>
        <position position="580"/>
    </location>
</feature>
<feature type="sequence conflict" description="In Ref. 2; BAA13821." evidence="6" ref="2">
    <original>N</original>
    <variation>Y</variation>
    <location>
        <position position="714"/>
    </location>
</feature>
<gene>
    <name type="primary">vtc4</name>
    <name type="ORF">SPCC1322.14c</name>
</gene>
<proteinExistence type="evidence at protein level"/>
<protein>
    <recommendedName>
        <fullName>Vacuolar transporter chaperone complex subunit 4</fullName>
    </recommendedName>
    <alternativeName>
        <fullName>Polyphosphate kinase</fullName>
    </alternativeName>
    <alternativeName>
        <fullName>SPX-dependent polyphosphate polymerase VTC subunit 4</fullName>
    </alternativeName>
    <alternativeName>
        <fullName>Vacuolar membrane polyphosphate polymerase catalytic subunit</fullName>
        <shortName>PolyP polymerase</shortName>
        <ecNumber evidence="1">2.7.4.1</ecNumber>
    </alternativeName>
</protein>
<keyword id="KW-0067">ATP-binding</keyword>
<keyword id="KW-0143">Chaperone</keyword>
<keyword id="KW-0464">Manganese</keyword>
<keyword id="KW-0472">Membrane</keyword>
<keyword id="KW-0479">Metal-binding</keyword>
<keyword id="KW-0547">Nucleotide-binding</keyword>
<keyword id="KW-0597">Phosphoprotein</keyword>
<keyword id="KW-1185">Reference proteome</keyword>
<keyword id="KW-0808">Transferase</keyword>
<keyword id="KW-0812">Transmembrane</keyword>
<keyword id="KW-1133">Transmembrane helix</keyword>
<keyword id="KW-0926">Vacuole</keyword>
<name>VTC4_SCHPO</name>
<evidence type="ECO:0000250" key="1">
    <source>
        <dbReference type="UniProtKB" id="P47075"/>
    </source>
</evidence>
<evidence type="ECO:0000255" key="2"/>
<evidence type="ECO:0000255" key="3">
    <source>
        <dbReference type="PROSITE-ProRule" id="PRU00714"/>
    </source>
</evidence>
<evidence type="ECO:0000256" key="4">
    <source>
        <dbReference type="SAM" id="MobiDB-lite"/>
    </source>
</evidence>
<evidence type="ECO:0000269" key="5">
    <source>
    </source>
</evidence>
<evidence type="ECO:0000305" key="6"/>
<comment type="function">
    <text evidence="1">Catalytic subunit of the vacuolar transporter chaperone (VTC) complex. The VTC complex acts as a vacuolar polyphosphate polymerase that catalyzes the synthesis of inorganic polyphosphate (polyP) via transfer of phosphate from ATP to a growing polyP chain, releasing ADP. VTC exposes its catalytic domain vtc4 to the cytosol, where the growing polyP chain winds through a tunnel-shaped pocket, integrating cytoplasmic polymer synthesis with polyP membrane translocation. The VTC complex carries 9 vacuolar transmembrane domains, which are likely to constitute the translocation channel into the organelle lumen. PolyP synthesis is tightly coupled to its transport into the vacuole lumen, in order to avoid otherwise toxic intermediates in the cytosol, and it depends on the proton gradient across the membrane, formed by V-ATPase. The VTC complex also plays a role in vacuolar membrane fusion.</text>
</comment>
<comment type="catalytic activity">
    <reaction evidence="1">
        <text>[phosphate](n) + ATP = [phosphate](n+1) + ADP</text>
        <dbReference type="Rhea" id="RHEA:19573"/>
        <dbReference type="Rhea" id="RHEA-COMP:9859"/>
        <dbReference type="Rhea" id="RHEA-COMP:14280"/>
        <dbReference type="ChEBI" id="CHEBI:16838"/>
        <dbReference type="ChEBI" id="CHEBI:30616"/>
        <dbReference type="ChEBI" id="CHEBI:456216"/>
        <dbReference type="EC" id="2.7.4.1"/>
    </reaction>
    <physiologicalReaction direction="left-to-right" evidence="1">
        <dbReference type="Rhea" id="RHEA:19574"/>
    </physiologicalReaction>
</comment>
<comment type="cofactor">
    <cofactor evidence="1">
        <name>Mn(2+)</name>
        <dbReference type="ChEBI" id="CHEBI:29035"/>
    </cofactor>
</comment>
<comment type="activity regulation">
    <text evidence="1">Activity of the enzyme is Mn(2+)-dependent and enhanced in the presence of pyrophosphate (PPi).</text>
</comment>
<comment type="subunit">
    <text evidence="1">The VTC core complex is an integral membrane heterooligomer composed of at least the catalytic subunit vtc4 and the accessory subunits vtc1 and vtc2. vtc1 is a small membrane protein without hydrophilic domain. Vtc2 and vtc4 are related and have 2 hydrophilic domains that face the cytosol, an N-terminal SPX domain and the central core domain. The central core in vtc4 is the catalytic domain.</text>
</comment>
<comment type="subcellular location">
    <subcellularLocation>
        <location evidence="1">Vacuole membrane</location>
        <topology evidence="2">Multi-pass membrane protein</topology>
    </subcellularLocation>
</comment>
<comment type="domain">
    <text evidence="1">The SPX domain has very high affinity for inositol polyphosphates. SPX domains may integrate inositol pyrophosphates (PP-InsP)-dependent signaling to adapt cytosolic phosphate concentrations to different metabolic situations.</text>
</comment>
<comment type="similarity">
    <text evidence="6">Belongs to the VTC4 family.</text>
</comment>